<feature type="chain" id="PRO_1000200797" description="Multidrug resistance protein MdtH">
    <location>
        <begin position="1"/>
        <end position="402"/>
    </location>
</feature>
<feature type="topological domain" description="Cytoplasmic" evidence="1">
    <location>
        <begin position="1"/>
        <end position="12"/>
    </location>
</feature>
<feature type="transmembrane region" description="Helical" evidence="1">
    <location>
        <begin position="13"/>
        <end position="33"/>
    </location>
</feature>
<feature type="topological domain" description="Periplasmic" evidence="1">
    <location>
        <begin position="34"/>
        <end position="98"/>
    </location>
</feature>
<feature type="transmembrane region" description="Helical" evidence="1">
    <location>
        <begin position="99"/>
        <end position="116"/>
    </location>
</feature>
<feature type="topological domain" description="Cytoplasmic" evidence="1">
    <location>
        <begin position="117"/>
        <end position="138"/>
    </location>
</feature>
<feature type="transmembrane region" description="Helical" evidence="1">
    <location>
        <begin position="139"/>
        <end position="159"/>
    </location>
</feature>
<feature type="topological domain" description="Periplasmic" evidence="1">
    <location>
        <begin position="160"/>
        <end position="164"/>
    </location>
</feature>
<feature type="transmembrane region" description="Helical" evidence="1">
    <location>
        <begin position="165"/>
        <end position="185"/>
    </location>
</feature>
<feature type="topological domain" description="Cytoplasmic" evidence="1">
    <location>
        <begin position="186"/>
        <end position="213"/>
    </location>
</feature>
<feature type="transmembrane region" description="Helical" evidence="1">
    <location>
        <begin position="214"/>
        <end position="234"/>
    </location>
</feature>
<feature type="topological domain" description="Periplasmic" evidence="1">
    <location>
        <begin position="235"/>
        <end position="243"/>
    </location>
</feature>
<feature type="transmembrane region" description="Helical" evidence="1">
    <location>
        <begin position="244"/>
        <end position="264"/>
    </location>
</feature>
<feature type="topological domain" description="Cytoplasmic" evidence="1">
    <location>
        <begin position="265"/>
        <end position="276"/>
    </location>
</feature>
<feature type="transmembrane region" description="Helical" evidence="1">
    <location>
        <begin position="277"/>
        <end position="297"/>
    </location>
</feature>
<feature type="topological domain" description="Periplasmic" evidence="1">
    <location>
        <begin position="298"/>
        <end position="299"/>
    </location>
</feature>
<feature type="transmembrane region" description="Helical" evidence="1">
    <location>
        <begin position="300"/>
        <end position="320"/>
    </location>
</feature>
<feature type="topological domain" description="Cytoplasmic" evidence="1">
    <location>
        <begin position="321"/>
        <end position="339"/>
    </location>
</feature>
<feature type="transmembrane region" description="Helical" evidence="1">
    <location>
        <begin position="340"/>
        <end position="360"/>
    </location>
</feature>
<feature type="topological domain" description="Periplasmic" evidence="1">
    <location>
        <begin position="361"/>
        <end position="367"/>
    </location>
</feature>
<feature type="transmembrane region" description="Helical" evidence="1">
    <location>
        <begin position="368"/>
        <end position="388"/>
    </location>
</feature>
<feature type="topological domain" description="Cytoplasmic" evidence="1">
    <location>
        <begin position="389"/>
        <end position="402"/>
    </location>
</feature>
<gene>
    <name evidence="1" type="primary">mdtH</name>
    <name type="ordered locus">ECH74115_1444</name>
</gene>
<proteinExistence type="inferred from homology"/>
<dbReference type="EMBL" id="CP001164">
    <property type="protein sequence ID" value="ACI39213.1"/>
    <property type="molecule type" value="Genomic_DNA"/>
</dbReference>
<dbReference type="RefSeq" id="WP_000092209.1">
    <property type="nucleotide sequence ID" value="NC_011353.1"/>
</dbReference>
<dbReference type="SMR" id="B5YVT5"/>
<dbReference type="KEGG" id="ecf:ECH74115_1444"/>
<dbReference type="HOGENOM" id="CLU_001265_60_2_6"/>
<dbReference type="GO" id="GO:0005886">
    <property type="term" value="C:plasma membrane"/>
    <property type="evidence" value="ECO:0007669"/>
    <property type="project" value="UniProtKB-SubCell"/>
</dbReference>
<dbReference type="GO" id="GO:0022857">
    <property type="term" value="F:transmembrane transporter activity"/>
    <property type="evidence" value="ECO:0007669"/>
    <property type="project" value="UniProtKB-UniRule"/>
</dbReference>
<dbReference type="GO" id="GO:0046677">
    <property type="term" value="P:response to antibiotic"/>
    <property type="evidence" value="ECO:0007669"/>
    <property type="project" value="UniProtKB-KW"/>
</dbReference>
<dbReference type="CDD" id="cd17329">
    <property type="entry name" value="MFS_MdtH_MDR_like"/>
    <property type="match status" value="1"/>
</dbReference>
<dbReference type="FunFam" id="1.20.1250.20:FF:000039">
    <property type="entry name" value="Multidrug resistance protein MdtH"/>
    <property type="match status" value="1"/>
</dbReference>
<dbReference type="Gene3D" id="1.20.1250.20">
    <property type="entry name" value="MFS general substrate transporter like domains"/>
    <property type="match status" value="1"/>
</dbReference>
<dbReference type="HAMAP" id="MF_01529">
    <property type="entry name" value="MFS_MdtH"/>
    <property type="match status" value="1"/>
</dbReference>
<dbReference type="InterPro" id="IPR011701">
    <property type="entry name" value="MFS"/>
</dbReference>
<dbReference type="InterPro" id="IPR020846">
    <property type="entry name" value="MFS_dom"/>
</dbReference>
<dbReference type="InterPro" id="IPR036259">
    <property type="entry name" value="MFS_trans_sf"/>
</dbReference>
<dbReference type="InterPro" id="IPR050171">
    <property type="entry name" value="MFS_Transporters"/>
</dbReference>
<dbReference type="InterPro" id="IPR022855">
    <property type="entry name" value="Multidrug-R_MdtH"/>
</dbReference>
<dbReference type="NCBIfam" id="NF008650">
    <property type="entry name" value="PRK11646.1"/>
    <property type="match status" value="1"/>
</dbReference>
<dbReference type="PANTHER" id="PTHR23517:SF2">
    <property type="entry name" value="MULTIDRUG RESISTANCE PROTEIN MDTH"/>
    <property type="match status" value="1"/>
</dbReference>
<dbReference type="PANTHER" id="PTHR23517">
    <property type="entry name" value="RESISTANCE PROTEIN MDTM, PUTATIVE-RELATED-RELATED"/>
    <property type="match status" value="1"/>
</dbReference>
<dbReference type="Pfam" id="PF07690">
    <property type="entry name" value="MFS_1"/>
    <property type="match status" value="1"/>
</dbReference>
<dbReference type="SUPFAM" id="SSF103473">
    <property type="entry name" value="MFS general substrate transporter"/>
    <property type="match status" value="1"/>
</dbReference>
<dbReference type="PROSITE" id="PS50850">
    <property type="entry name" value="MFS"/>
    <property type="match status" value="1"/>
</dbReference>
<sequence length="402" mass="44391">MSRVSQARNLGKYFLLIDNMLVVLGFFVVFPLISIRFVDQMGWAAVMVGIALGLRQFIQQGLGIFGGAIADRFGAKPMIVTGMLMRAAGFATMGIAHEPWLLWFSCLLSGLGGTLFDPPRSALVVKLIRPQQRGRFFSLLMMQDSAGAVIGALLGSWLLQYDFRLVCATGAVLFVLCAAFNAWLLPAWKLSTVRTPVREGMTRVMRDKRFVTYVLTLAGYYMLAVQVMLMLPIMVNDVAGAPSAVKWMYAIEACLSLTLLYPIARWSEKHFRLEHRLMAGLLIMSLSMMPVGMVSGLQQLFTLICLFYIGSIIAEPARETLSASLADARARGSYMGFSRLGLAIGGAIGYIGGGWLFDLGKSVHQPELPWMMLGIIGIFTFLALGWQFSQKRAARRLLERDA</sequence>
<reference key="1">
    <citation type="journal article" date="2011" name="Proc. Natl. Acad. Sci. U.S.A.">
        <title>Genomic anatomy of Escherichia coli O157:H7 outbreaks.</title>
        <authorList>
            <person name="Eppinger M."/>
            <person name="Mammel M.K."/>
            <person name="Leclerc J.E."/>
            <person name="Ravel J."/>
            <person name="Cebula T.A."/>
        </authorList>
    </citation>
    <scope>NUCLEOTIDE SEQUENCE [LARGE SCALE GENOMIC DNA]</scope>
    <source>
        <strain>EC4115 / EHEC</strain>
    </source>
</reference>
<keyword id="KW-0046">Antibiotic resistance</keyword>
<keyword id="KW-0997">Cell inner membrane</keyword>
<keyword id="KW-1003">Cell membrane</keyword>
<keyword id="KW-0472">Membrane</keyword>
<keyword id="KW-0812">Transmembrane</keyword>
<keyword id="KW-1133">Transmembrane helix</keyword>
<keyword id="KW-0813">Transport</keyword>
<comment type="function">
    <text evidence="1">Confers resistance to norfloxacin and enoxacin.</text>
</comment>
<comment type="subcellular location">
    <subcellularLocation>
        <location evidence="1">Cell inner membrane</location>
        <topology evidence="1">Multi-pass membrane protein</topology>
    </subcellularLocation>
</comment>
<comment type="similarity">
    <text evidence="1">Belongs to the major facilitator superfamily. DHA1 family. MdtH (TC 2.A.1.2.21) subfamily.</text>
</comment>
<name>MDTH_ECO5E</name>
<evidence type="ECO:0000255" key="1">
    <source>
        <dbReference type="HAMAP-Rule" id="MF_01529"/>
    </source>
</evidence>
<accession>B5YVT5</accession>
<organism>
    <name type="scientific">Escherichia coli O157:H7 (strain EC4115 / EHEC)</name>
    <dbReference type="NCBI Taxonomy" id="444450"/>
    <lineage>
        <taxon>Bacteria</taxon>
        <taxon>Pseudomonadati</taxon>
        <taxon>Pseudomonadota</taxon>
        <taxon>Gammaproteobacteria</taxon>
        <taxon>Enterobacterales</taxon>
        <taxon>Enterobacteriaceae</taxon>
        <taxon>Escherichia</taxon>
    </lineage>
</organism>
<protein>
    <recommendedName>
        <fullName evidence="1">Multidrug resistance protein MdtH</fullName>
    </recommendedName>
</protein>